<proteinExistence type="predicted"/>
<dbReference type="EMBL" id="AF303741">
    <property type="protein sequence ID" value="AAK81975.1"/>
    <property type="molecule type" value="Genomic_DNA"/>
</dbReference>
<dbReference type="RefSeq" id="NP_149504.1">
    <property type="nucleotide sequence ID" value="NC_003038.1"/>
</dbReference>
<dbReference type="SMR" id="Q91G57"/>
<dbReference type="KEGG" id="vg:1733307"/>
<dbReference type="OrthoDB" id="36780at10239"/>
<dbReference type="Proteomes" id="UP000001359">
    <property type="component" value="Genome"/>
</dbReference>
<reference key="1">
    <citation type="journal article" date="2001" name="Virology">
        <title>Analysis of the first complete DNA sequence of an invertebrate iridovirus: coding strategy of the genome of Chilo iridescent virus.</title>
        <authorList>
            <person name="Jakob N.J."/>
            <person name="Mueller K."/>
            <person name="Bahr U."/>
            <person name="Darai G."/>
        </authorList>
    </citation>
    <scope>NUCLEOTIDE SEQUENCE [LARGE SCALE GENOMIC DNA]</scope>
</reference>
<reference key="2">
    <citation type="journal article" date="2007" name="Virol. J.">
        <title>Comparative genomic analysis of the family Iridoviridae: re-annotating and defining the core set of iridovirus genes.</title>
        <authorList>
            <person name="Eaton H.E."/>
            <person name="Metcalf J."/>
            <person name="Penny E."/>
            <person name="Tcherepanov V."/>
            <person name="Upton C."/>
            <person name="Brunetti C.R."/>
        </authorList>
    </citation>
    <scope>GENOME REANNOTATION</scope>
</reference>
<evidence type="ECO:0000255" key="1"/>
<protein>
    <recommendedName>
        <fullName>Uncharacterized protein 041L</fullName>
    </recommendedName>
</protein>
<accession>Q91G57</accession>
<feature type="chain" id="PRO_0000377967" description="Uncharacterized protein 041L">
    <location>
        <begin position="1"/>
        <end position="122"/>
    </location>
</feature>
<feature type="coiled-coil region" evidence="1">
    <location>
        <begin position="46"/>
        <end position="116"/>
    </location>
</feature>
<name>041L_IIV6</name>
<organism>
    <name type="scientific">Invertebrate iridescent virus 6</name>
    <name type="common">IIV-6</name>
    <name type="synonym">Chilo iridescent virus</name>
    <dbReference type="NCBI Taxonomy" id="176652"/>
    <lineage>
        <taxon>Viruses</taxon>
        <taxon>Varidnaviria</taxon>
        <taxon>Bamfordvirae</taxon>
        <taxon>Nucleocytoviricota</taxon>
        <taxon>Megaviricetes</taxon>
        <taxon>Pimascovirales</taxon>
        <taxon>Iridoviridae</taxon>
        <taxon>Betairidovirinae</taxon>
        <taxon>Iridovirus</taxon>
    </lineage>
</organism>
<sequence length="122" mass="14748">MNFIRENETKYVLSTYQSMTPKNLMEYLLKYNYDNDCVYIFNNLPKDLQKEVDDLAKEVVKANDEQIKAQDEQIKANDQKLKQLDVMIEFMKQYNKQLDNDIYLLEHQLENKRELNRQLGIF</sequence>
<gene>
    <name type="ORF">IIV6-041L</name>
</gene>
<keyword id="KW-0175">Coiled coil</keyword>
<keyword id="KW-1185">Reference proteome</keyword>
<organismHost>
    <name type="scientific">Acheta domesticus</name>
    <name type="common">House cricket</name>
    <dbReference type="NCBI Taxonomy" id="6997"/>
</organismHost>
<organismHost>
    <name type="scientific">Chilo suppressalis</name>
    <name type="common">Asiatic rice borer moth</name>
    <dbReference type="NCBI Taxonomy" id="168631"/>
</organismHost>
<organismHost>
    <name type="scientific">Gryllus bimaculatus</name>
    <name type="common">Two-spotted cricket</name>
    <dbReference type="NCBI Taxonomy" id="6999"/>
</organismHost>
<organismHost>
    <name type="scientific">Gryllus campestris</name>
    <dbReference type="NCBI Taxonomy" id="58607"/>
</organismHost>
<organismHost>
    <name type="scientific">Spodoptera frugiperda</name>
    <name type="common">Fall armyworm</name>
    <dbReference type="NCBI Taxonomy" id="7108"/>
</organismHost>